<proteinExistence type="evidence at transcript level"/>
<sequence length="826" mass="92712">MKMKHFTRLLSLFFILITSLSLAKSTIVSHDERAITINGKRRILLSGSIHYPRSTADMWPDLINKAKDGGLDAIETYVFWNAHEPKRREYDFSGNLDVVRFIKTIQDAGLYSVLRIGPYVCAEWNYGGFPVWLHNMPNMKFRTVNPSFMNEMQNFTTKIVKMMKEEKLFASQGGPIILAQIENEYGNVISSYGAEGKAYIDWCANMANSLDIGVPWLMCQQPNAPQPMLETCNGFYCDQYEPTNPSTPKMWTENWTGWFKNWGGKHPYRTAEDLAFSVARFFQTGGTFQNYYMYHGGTNFGRVAGGPYITTSYDYHAPLDEFGNLNQPKWGHLKQLHTVLKSMEKSLTYGNISRIDLGNSIKATIYTTKEGSSCFIGNVNATADALVNFKGKDYHVPAWSVSVLPDCDKEAYNTAKVNTQTSIMTEDSSKPERLEWTWRPESAQKMILKGSGDLIAKGLVDQKDVTNDASDYLWYMTRLHLDKKDPLWSRNMTLRVHSNAHVLHAYVNGKYVGNQFVKDGKFDYRFERKVNHLVHGTNHISLLSVSVGLQNYGPFFESGPTGINGPVSLVGYKGEETIEKDLSQHQWDYKIGLNGYNDKLFSIKSVGHQKWANEKLPTGRMLTWYKAKFKAPLGKEPVIVDLNGLGKGEAWINGQSIGRYWPSFNSSDDGCKDECDYRGAYGSDKCAFMCGKPTQRWYHVPRSFLNASGHNTITLFEEMGGNPSMVNFKTVVVGTVCARAHEHNKVELSCHNRPISAVKFASFGNPLGHCGSFAVGTCQGDKDAAKTVAKECVGKLNCTVNVSSDTFGSTLDCGDSPKKLAVELEC</sequence>
<protein>
    <recommendedName>
        <fullName>Beta-galactosidase 7</fullName>
        <shortName>Lactase 7</shortName>
        <ecNumber>3.2.1.23</ecNumber>
    </recommendedName>
</protein>
<name>BGAL7_ARATH</name>
<accession>Q9SCV5</accession>
<accession>Q94AU4</accession>
<dbReference type="EC" id="3.2.1.23"/>
<dbReference type="EMBL" id="AF296832">
    <property type="status" value="NOT_ANNOTATED_CDS"/>
    <property type="molecule type" value="Genomic_DNA"/>
</dbReference>
<dbReference type="EMBL" id="CP002688">
    <property type="protein sequence ID" value="AED92880.1"/>
    <property type="molecule type" value="Genomic_DNA"/>
</dbReference>
<dbReference type="EMBL" id="AJ270303">
    <property type="protein sequence ID" value="CAB64743.1"/>
    <property type="molecule type" value="mRNA"/>
</dbReference>
<dbReference type="EMBL" id="AY045791">
    <property type="protein sequence ID" value="AAK76465.1"/>
    <property type="status" value="ALT_INIT"/>
    <property type="molecule type" value="mRNA"/>
</dbReference>
<dbReference type="RefSeq" id="NP_568399.4">
    <property type="nucleotide sequence ID" value="NM_122078.5"/>
</dbReference>
<dbReference type="SMR" id="Q9SCV5"/>
<dbReference type="FunCoup" id="Q9SCV5">
    <property type="interactions" value="1"/>
</dbReference>
<dbReference type="STRING" id="3702.Q9SCV5"/>
<dbReference type="CAZy" id="GH35">
    <property type="family name" value="Glycoside Hydrolase Family 35"/>
</dbReference>
<dbReference type="GlyCosmos" id="Q9SCV5">
    <property type="glycosylation" value="9 sites, No reported glycans"/>
</dbReference>
<dbReference type="GlyGen" id="Q9SCV5">
    <property type="glycosylation" value="9 sites"/>
</dbReference>
<dbReference type="PaxDb" id="3702-AT5G20710.1"/>
<dbReference type="ProteomicsDB" id="240855"/>
<dbReference type="EnsemblPlants" id="AT5G20710.1">
    <property type="protein sequence ID" value="AT5G20710.1"/>
    <property type="gene ID" value="AT5G20710"/>
</dbReference>
<dbReference type="GeneID" id="832194"/>
<dbReference type="Gramene" id="AT5G20710.1">
    <property type="protein sequence ID" value="AT5G20710.1"/>
    <property type="gene ID" value="AT5G20710"/>
</dbReference>
<dbReference type="KEGG" id="ath:AT5G20710"/>
<dbReference type="Araport" id="AT5G20710"/>
<dbReference type="TAIR" id="AT5G20710">
    <property type="gene designation" value="BGAL7"/>
</dbReference>
<dbReference type="eggNOG" id="KOG0496">
    <property type="taxonomic scope" value="Eukaryota"/>
</dbReference>
<dbReference type="HOGENOM" id="CLU_007853_4_0_1"/>
<dbReference type="InParanoid" id="Q9SCV5"/>
<dbReference type="OMA" id="AHEYIHW"/>
<dbReference type="PhylomeDB" id="Q9SCV5"/>
<dbReference type="BioCyc" id="ARA:AT5G20710-MONOMER"/>
<dbReference type="PRO" id="PR:Q9SCV5"/>
<dbReference type="Proteomes" id="UP000006548">
    <property type="component" value="Chromosome 5"/>
</dbReference>
<dbReference type="ExpressionAtlas" id="Q9SCV5">
    <property type="expression patterns" value="baseline and differential"/>
</dbReference>
<dbReference type="GO" id="GO:0048046">
    <property type="term" value="C:apoplast"/>
    <property type="evidence" value="ECO:0007669"/>
    <property type="project" value="UniProtKB-SubCell"/>
</dbReference>
<dbReference type="GO" id="GO:0004565">
    <property type="term" value="F:beta-galactosidase activity"/>
    <property type="evidence" value="ECO:0000304"/>
    <property type="project" value="TAIR"/>
</dbReference>
<dbReference type="GO" id="GO:0030246">
    <property type="term" value="F:carbohydrate binding"/>
    <property type="evidence" value="ECO:0007669"/>
    <property type="project" value="InterPro"/>
</dbReference>
<dbReference type="GO" id="GO:0005975">
    <property type="term" value="P:carbohydrate metabolic process"/>
    <property type="evidence" value="ECO:0007669"/>
    <property type="project" value="InterPro"/>
</dbReference>
<dbReference type="CDD" id="cd22842">
    <property type="entry name" value="Gal_Rha_Lectin_BGal"/>
    <property type="match status" value="1"/>
</dbReference>
<dbReference type="FunFam" id="2.60.120.260:FF:000097">
    <property type="entry name" value="Beta-galactosidase"/>
    <property type="match status" value="1"/>
</dbReference>
<dbReference type="FunFam" id="2.60.120.260:FF:000142">
    <property type="entry name" value="Beta-galactosidase"/>
    <property type="match status" value="1"/>
</dbReference>
<dbReference type="FunFam" id="3.20.20.80:FF:000098">
    <property type="entry name" value="Beta-galactosidase"/>
    <property type="match status" value="1"/>
</dbReference>
<dbReference type="Gene3D" id="2.60.120.740">
    <property type="match status" value="1"/>
</dbReference>
<dbReference type="Gene3D" id="2.60.120.260">
    <property type="entry name" value="Galactose-binding domain-like"/>
    <property type="match status" value="2"/>
</dbReference>
<dbReference type="Gene3D" id="3.20.20.80">
    <property type="entry name" value="Glycosidases"/>
    <property type="match status" value="1"/>
</dbReference>
<dbReference type="InterPro" id="IPR048913">
    <property type="entry name" value="BetaGal_gal-bd"/>
</dbReference>
<dbReference type="InterPro" id="IPR008979">
    <property type="entry name" value="Galactose-bd-like_sf"/>
</dbReference>
<dbReference type="InterPro" id="IPR041392">
    <property type="entry name" value="GHD"/>
</dbReference>
<dbReference type="InterPro" id="IPR031330">
    <property type="entry name" value="Gly_Hdrlase_35_cat"/>
</dbReference>
<dbReference type="InterPro" id="IPR019801">
    <property type="entry name" value="Glyco_hydro_35_CS"/>
</dbReference>
<dbReference type="InterPro" id="IPR001944">
    <property type="entry name" value="Glycoside_Hdrlase_35"/>
</dbReference>
<dbReference type="InterPro" id="IPR017853">
    <property type="entry name" value="Glycoside_hydrolase_SF"/>
</dbReference>
<dbReference type="InterPro" id="IPR000922">
    <property type="entry name" value="Lectin_gal-bd_dom"/>
</dbReference>
<dbReference type="InterPro" id="IPR043159">
    <property type="entry name" value="Lectin_gal-bd_sf"/>
</dbReference>
<dbReference type="PANTHER" id="PTHR23421">
    <property type="entry name" value="BETA-GALACTOSIDASE RELATED"/>
    <property type="match status" value="1"/>
</dbReference>
<dbReference type="Pfam" id="PF21467">
    <property type="entry name" value="BetaGal_gal-bd"/>
    <property type="match status" value="1"/>
</dbReference>
<dbReference type="Pfam" id="PF17834">
    <property type="entry name" value="GHD"/>
    <property type="match status" value="1"/>
</dbReference>
<dbReference type="Pfam" id="PF01301">
    <property type="entry name" value="Glyco_hydro_35"/>
    <property type="match status" value="1"/>
</dbReference>
<dbReference type="Pfam" id="PF02140">
    <property type="entry name" value="SUEL_Lectin"/>
    <property type="match status" value="1"/>
</dbReference>
<dbReference type="PRINTS" id="PR00742">
    <property type="entry name" value="GLHYDRLASE35"/>
</dbReference>
<dbReference type="SUPFAM" id="SSF51445">
    <property type="entry name" value="(Trans)glycosidases"/>
    <property type="match status" value="1"/>
</dbReference>
<dbReference type="SUPFAM" id="SSF49785">
    <property type="entry name" value="Galactose-binding domain-like"/>
    <property type="match status" value="2"/>
</dbReference>
<dbReference type="PROSITE" id="PS01182">
    <property type="entry name" value="GLYCOSYL_HYDROL_F35"/>
    <property type="match status" value="1"/>
</dbReference>
<dbReference type="PROSITE" id="PS50228">
    <property type="entry name" value="SUEL_LECTIN"/>
    <property type="match status" value="1"/>
</dbReference>
<feature type="signal peptide" evidence="1">
    <location>
        <begin position="1"/>
        <end position="25"/>
    </location>
</feature>
<feature type="chain" id="PRO_0000293092" description="Beta-galactosidase 7">
    <location>
        <begin position="26"/>
        <end position="826"/>
    </location>
</feature>
<feature type="domain" description="SUEL-type lectin" evidence="2">
    <location>
        <begin position="740"/>
        <end position="826"/>
    </location>
</feature>
<feature type="active site" description="Proton donor" evidence="1">
    <location>
        <position position="184"/>
    </location>
</feature>
<feature type="active site" description="Nucleophile" evidence="1">
    <location>
        <position position="253"/>
    </location>
</feature>
<feature type="glycosylation site" description="N-linked (GlcNAc...) asparagine" evidence="1">
    <location>
        <position position="154"/>
    </location>
</feature>
<feature type="glycosylation site" description="N-linked (GlcNAc...) asparagine" evidence="1">
    <location>
        <position position="254"/>
    </location>
</feature>
<feature type="glycosylation site" description="N-linked (GlcNAc...) asparagine" evidence="1">
    <location>
        <position position="351"/>
    </location>
</feature>
<feature type="glycosylation site" description="N-linked (GlcNAc...) asparagine" evidence="1">
    <location>
        <position position="380"/>
    </location>
</feature>
<feature type="glycosylation site" description="N-linked (GlcNAc...) asparagine" evidence="1">
    <location>
        <position position="491"/>
    </location>
</feature>
<feature type="glycosylation site" description="N-linked (GlcNAc...) asparagine" evidence="1">
    <location>
        <position position="665"/>
    </location>
</feature>
<feature type="glycosylation site" description="N-linked (GlcNAc...) asparagine" evidence="1">
    <location>
        <position position="706"/>
    </location>
</feature>
<feature type="glycosylation site" description="N-linked (GlcNAc...) asparagine" evidence="1">
    <location>
        <position position="797"/>
    </location>
</feature>
<feature type="glycosylation site" description="N-linked (GlcNAc...) asparagine" evidence="1">
    <location>
        <position position="801"/>
    </location>
</feature>
<feature type="sequence conflict" description="In Ref. 4; AAK76465." evidence="4" ref="4">
    <original>E</original>
    <variation>K</variation>
    <location>
        <position position="674"/>
    </location>
</feature>
<reference key="1">
    <citation type="journal article" date="2000" name="Nature">
        <title>Sequence and analysis of chromosome 5 of the plant Arabidopsis thaliana.</title>
        <authorList>
            <person name="Tabata S."/>
            <person name="Kaneko T."/>
            <person name="Nakamura Y."/>
            <person name="Kotani H."/>
            <person name="Kato T."/>
            <person name="Asamizu E."/>
            <person name="Miyajima N."/>
            <person name="Sasamoto S."/>
            <person name="Kimura T."/>
            <person name="Hosouchi T."/>
            <person name="Kawashima K."/>
            <person name="Kohara M."/>
            <person name="Matsumoto M."/>
            <person name="Matsuno A."/>
            <person name="Muraki A."/>
            <person name="Nakayama S."/>
            <person name="Nakazaki N."/>
            <person name="Naruo K."/>
            <person name="Okumura S."/>
            <person name="Shinpo S."/>
            <person name="Takeuchi C."/>
            <person name="Wada T."/>
            <person name="Watanabe A."/>
            <person name="Yamada M."/>
            <person name="Yasuda M."/>
            <person name="Sato S."/>
            <person name="de la Bastide M."/>
            <person name="Huang E."/>
            <person name="Spiegel L."/>
            <person name="Gnoj L."/>
            <person name="O'Shaughnessy A."/>
            <person name="Preston R."/>
            <person name="Habermann K."/>
            <person name="Murray J."/>
            <person name="Johnson D."/>
            <person name="Rohlfing T."/>
            <person name="Nelson J."/>
            <person name="Stoneking T."/>
            <person name="Pepin K."/>
            <person name="Spieth J."/>
            <person name="Sekhon M."/>
            <person name="Armstrong J."/>
            <person name="Becker M."/>
            <person name="Belter E."/>
            <person name="Cordum H."/>
            <person name="Cordes M."/>
            <person name="Courtney L."/>
            <person name="Courtney W."/>
            <person name="Dante M."/>
            <person name="Du H."/>
            <person name="Edwards J."/>
            <person name="Fryman J."/>
            <person name="Haakensen B."/>
            <person name="Lamar E."/>
            <person name="Latreille P."/>
            <person name="Leonard S."/>
            <person name="Meyer R."/>
            <person name="Mulvaney E."/>
            <person name="Ozersky P."/>
            <person name="Riley A."/>
            <person name="Strowmatt C."/>
            <person name="Wagner-McPherson C."/>
            <person name="Wollam A."/>
            <person name="Yoakum M."/>
            <person name="Bell M."/>
            <person name="Dedhia N."/>
            <person name="Parnell L."/>
            <person name="Shah R."/>
            <person name="Rodriguez M."/>
            <person name="Hoon See L."/>
            <person name="Vil D."/>
            <person name="Baker J."/>
            <person name="Kirchoff K."/>
            <person name="Toth K."/>
            <person name="King L."/>
            <person name="Bahret A."/>
            <person name="Miller B."/>
            <person name="Marra M.A."/>
            <person name="Martienssen R."/>
            <person name="McCombie W.R."/>
            <person name="Wilson R.K."/>
            <person name="Murphy G."/>
            <person name="Bancroft I."/>
            <person name="Volckaert G."/>
            <person name="Wambutt R."/>
            <person name="Duesterhoeft A."/>
            <person name="Stiekema W."/>
            <person name="Pohl T."/>
            <person name="Entian K.-D."/>
            <person name="Terryn N."/>
            <person name="Hartley N."/>
            <person name="Bent E."/>
            <person name="Johnson S."/>
            <person name="Langham S.-A."/>
            <person name="McCullagh B."/>
            <person name="Robben J."/>
            <person name="Grymonprez B."/>
            <person name="Zimmermann W."/>
            <person name="Ramsperger U."/>
            <person name="Wedler H."/>
            <person name="Balke K."/>
            <person name="Wedler E."/>
            <person name="Peters S."/>
            <person name="van Staveren M."/>
            <person name="Dirkse W."/>
            <person name="Mooijman P."/>
            <person name="Klein Lankhorst R."/>
            <person name="Weitzenegger T."/>
            <person name="Bothe G."/>
            <person name="Rose M."/>
            <person name="Hauf J."/>
            <person name="Berneiser S."/>
            <person name="Hempel S."/>
            <person name="Feldpausch M."/>
            <person name="Lamberth S."/>
            <person name="Villarroel R."/>
            <person name="Gielen J."/>
            <person name="Ardiles W."/>
            <person name="Bents O."/>
            <person name="Lemcke K."/>
            <person name="Kolesov G."/>
            <person name="Mayer K.F.X."/>
            <person name="Rudd S."/>
            <person name="Schoof H."/>
            <person name="Schueller C."/>
            <person name="Zaccaria P."/>
            <person name="Mewes H.-W."/>
            <person name="Bevan M."/>
            <person name="Fransz P.F."/>
        </authorList>
    </citation>
    <scope>NUCLEOTIDE SEQUENCE [LARGE SCALE GENOMIC DNA]</scope>
    <source>
        <strain>cv. Columbia</strain>
    </source>
</reference>
<reference key="2">
    <citation type="journal article" date="2017" name="Plant J.">
        <title>Araport11: a complete reannotation of the Arabidopsis thaliana reference genome.</title>
        <authorList>
            <person name="Cheng C.Y."/>
            <person name="Krishnakumar V."/>
            <person name="Chan A.P."/>
            <person name="Thibaud-Nissen F."/>
            <person name="Schobel S."/>
            <person name="Town C.D."/>
        </authorList>
    </citation>
    <scope>GENOME REANNOTATION</scope>
    <source>
        <strain>cv. Columbia</strain>
    </source>
</reference>
<reference key="3">
    <citation type="submission" date="1999-10" db="EMBL/GenBank/DDBJ databases">
        <title>The beta-galactosidases are encoding by a multigene family in Arabidopsis thaliana.</title>
        <authorList>
            <person name="Gy I."/>
            <person name="Kreis M."/>
            <person name="Lecharny A."/>
        </authorList>
    </citation>
    <scope>NUCLEOTIDE SEQUENCE [MRNA] OF 39-826</scope>
</reference>
<reference key="4">
    <citation type="journal article" date="2003" name="Science">
        <title>Empirical analysis of transcriptional activity in the Arabidopsis genome.</title>
        <authorList>
            <person name="Yamada K."/>
            <person name="Lim J."/>
            <person name="Dale J.M."/>
            <person name="Chen H."/>
            <person name="Shinn P."/>
            <person name="Palm C.J."/>
            <person name="Southwick A.M."/>
            <person name="Wu H.C."/>
            <person name="Kim C.J."/>
            <person name="Nguyen M."/>
            <person name="Pham P.K."/>
            <person name="Cheuk R.F."/>
            <person name="Karlin-Newmann G."/>
            <person name="Liu S.X."/>
            <person name="Lam B."/>
            <person name="Sakano H."/>
            <person name="Wu T."/>
            <person name="Yu G."/>
            <person name="Miranda M."/>
            <person name="Quach H.L."/>
            <person name="Tripp M."/>
            <person name="Chang C.H."/>
            <person name="Lee J.M."/>
            <person name="Toriumi M.J."/>
            <person name="Chan M.M."/>
            <person name="Tang C.C."/>
            <person name="Onodera C.S."/>
            <person name="Deng J.M."/>
            <person name="Akiyama K."/>
            <person name="Ansari Y."/>
            <person name="Arakawa T."/>
            <person name="Banh J."/>
            <person name="Banno F."/>
            <person name="Bowser L."/>
            <person name="Brooks S.Y."/>
            <person name="Carninci P."/>
            <person name="Chao Q."/>
            <person name="Choy N."/>
            <person name="Enju A."/>
            <person name="Goldsmith A.D."/>
            <person name="Gurjal M."/>
            <person name="Hansen N.F."/>
            <person name="Hayashizaki Y."/>
            <person name="Johnson-Hopson C."/>
            <person name="Hsuan V.W."/>
            <person name="Iida K."/>
            <person name="Karnes M."/>
            <person name="Khan S."/>
            <person name="Koesema E."/>
            <person name="Ishida J."/>
            <person name="Jiang P.X."/>
            <person name="Jones T."/>
            <person name="Kawai J."/>
            <person name="Kamiya A."/>
            <person name="Meyers C."/>
            <person name="Nakajima M."/>
            <person name="Narusaka M."/>
            <person name="Seki M."/>
            <person name="Sakurai T."/>
            <person name="Satou M."/>
            <person name="Tamse R."/>
            <person name="Vaysberg M."/>
            <person name="Wallender E.K."/>
            <person name="Wong C."/>
            <person name="Yamamura Y."/>
            <person name="Yuan S."/>
            <person name="Shinozaki K."/>
            <person name="Davis R.W."/>
            <person name="Theologis A."/>
            <person name="Ecker J.R."/>
        </authorList>
    </citation>
    <scope>NUCLEOTIDE SEQUENCE [LARGE SCALE MRNA] OF 202-826</scope>
    <source>
        <strain>cv. Columbia</strain>
    </source>
</reference>
<reference key="5">
    <citation type="journal article" date="2007" name="Phytochemistry">
        <title>Functional genomic analysis of Arabidopsis thaliana glycoside hydrolase family 35.</title>
        <authorList>
            <person name="Ahn Y.O."/>
            <person name="Zheng M."/>
            <person name="Bevan D.R."/>
            <person name="Esen A."/>
            <person name="Shiu S.-H."/>
            <person name="Benson J."/>
            <person name="Peng H.-P."/>
            <person name="Miller J.T."/>
            <person name="Cheng C.-L."/>
            <person name="Poulton J.E."/>
            <person name="Shih M.-C."/>
        </authorList>
    </citation>
    <scope>TISSUE SPECIFICITY</scope>
    <scope>GENE FAMILY</scope>
    <scope>NOMENCLATURE</scope>
</reference>
<gene>
    <name type="primary">BGAL7</name>
    <name type="ordered locus">At5g20710</name>
    <name type="ORF">T1M15.110</name>
</gene>
<organism>
    <name type="scientific">Arabidopsis thaliana</name>
    <name type="common">Mouse-ear cress</name>
    <dbReference type="NCBI Taxonomy" id="3702"/>
    <lineage>
        <taxon>Eukaryota</taxon>
        <taxon>Viridiplantae</taxon>
        <taxon>Streptophyta</taxon>
        <taxon>Embryophyta</taxon>
        <taxon>Tracheophyta</taxon>
        <taxon>Spermatophyta</taxon>
        <taxon>Magnoliopsida</taxon>
        <taxon>eudicotyledons</taxon>
        <taxon>Gunneridae</taxon>
        <taxon>Pentapetalae</taxon>
        <taxon>rosids</taxon>
        <taxon>malvids</taxon>
        <taxon>Brassicales</taxon>
        <taxon>Brassicaceae</taxon>
        <taxon>Camelineae</taxon>
        <taxon>Arabidopsis</taxon>
    </lineage>
</organism>
<comment type="catalytic activity">
    <reaction>
        <text>Hydrolysis of terminal non-reducing beta-D-galactose residues in beta-D-galactosides.</text>
        <dbReference type="EC" id="3.2.1.23"/>
    </reaction>
</comment>
<comment type="subcellular location">
    <subcellularLocation>
        <location evidence="4">Secreted</location>
        <location evidence="4">Extracellular space</location>
        <location evidence="4">Apoplast</location>
    </subcellularLocation>
</comment>
<comment type="tissue specificity">
    <text evidence="3">Expressed in flowers.</text>
</comment>
<comment type="similarity">
    <text evidence="4">Belongs to the glycosyl hydrolase 35 family.</text>
</comment>
<comment type="sequence caution" evidence="4">
    <conflict type="erroneous initiation">
        <sequence resource="EMBL-CDS" id="AAK76465"/>
    </conflict>
</comment>
<evidence type="ECO:0000255" key="1"/>
<evidence type="ECO:0000255" key="2">
    <source>
        <dbReference type="PROSITE-ProRule" id="PRU00260"/>
    </source>
</evidence>
<evidence type="ECO:0000269" key="3">
    <source>
    </source>
</evidence>
<evidence type="ECO:0000305" key="4"/>
<keyword id="KW-0052">Apoplast</keyword>
<keyword id="KW-0325">Glycoprotein</keyword>
<keyword id="KW-0326">Glycosidase</keyword>
<keyword id="KW-0378">Hydrolase</keyword>
<keyword id="KW-1185">Reference proteome</keyword>
<keyword id="KW-0964">Secreted</keyword>
<keyword id="KW-0732">Signal</keyword>